<comment type="subcellular location">
    <subcellularLocation>
        <location evidence="1">Cell membrane</location>
        <topology evidence="1">Lipid-anchor</topology>
    </subcellularLocation>
</comment>
<comment type="similarity">
    <text evidence="2">Belongs to the staphylococcal tandem lipoprotein family.</text>
</comment>
<keyword id="KW-1003">Cell membrane</keyword>
<keyword id="KW-0449">Lipoprotein</keyword>
<keyword id="KW-0472">Membrane</keyword>
<keyword id="KW-0564">Palmitate</keyword>
<keyword id="KW-0732">Signal</keyword>
<gene>
    <name type="ordered locus">SA2273</name>
</gene>
<feature type="signal peptide" evidence="1">
    <location>
        <begin position="1"/>
        <end position="22"/>
    </location>
</feature>
<feature type="chain" id="PRO_0000282139" description="Uncharacterized lipoprotein SA2273">
    <location>
        <begin position="23"/>
        <end position="264"/>
    </location>
</feature>
<feature type="lipid moiety-binding region" description="N-palmitoyl cysteine" evidence="1">
    <location>
        <position position="23"/>
    </location>
</feature>
<feature type="lipid moiety-binding region" description="S-diacylglycerol cysteine" evidence="1">
    <location>
        <position position="23"/>
    </location>
</feature>
<reference key="1">
    <citation type="journal article" date="2001" name="Lancet">
        <title>Whole genome sequencing of meticillin-resistant Staphylococcus aureus.</title>
        <authorList>
            <person name="Kuroda M."/>
            <person name="Ohta T."/>
            <person name="Uchiyama I."/>
            <person name="Baba T."/>
            <person name="Yuzawa H."/>
            <person name="Kobayashi I."/>
            <person name="Cui L."/>
            <person name="Oguchi A."/>
            <person name="Aoki K."/>
            <person name="Nagai Y."/>
            <person name="Lian J.-Q."/>
            <person name="Ito T."/>
            <person name="Kanamori M."/>
            <person name="Matsumaru H."/>
            <person name="Maruyama A."/>
            <person name="Murakami H."/>
            <person name="Hosoyama A."/>
            <person name="Mizutani-Ui Y."/>
            <person name="Takahashi N.K."/>
            <person name="Sawano T."/>
            <person name="Inoue R."/>
            <person name="Kaito C."/>
            <person name="Sekimizu K."/>
            <person name="Hirakawa H."/>
            <person name="Kuhara S."/>
            <person name="Goto S."/>
            <person name="Yabuzaki J."/>
            <person name="Kanehisa M."/>
            <person name="Yamashita A."/>
            <person name="Oshima K."/>
            <person name="Furuya K."/>
            <person name="Yoshino C."/>
            <person name="Shiba T."/>
            <person name="Hattori M."/>
            <person name="Ogasawara N."/>
            <person name="Hayashi H."/>
            <person name="Hiramatsu K."/>
        </authorList>
    </citation>
    <scope>NUCLEOTIDE SEQUENCE [LARGE SCALE GENOMIC DNA]</scope>
    <source>
        <strain>N315</strain>
    </source>
</reference>
<reference key="2">
    <citation type="submission" date="2007-10" db="UniProtKB">
        <title>Shotgun proteomic analysis of total and membrane protein extracts of S. aureus strain N315.</title>
        <authorList>
            <person name="Vaezzadeh A.R."/>
            <person name="Deshusses J."/>
            <person name="Lescuyer P."/>
            <person name="Hochstrasser D.F."/>
        </authorList>
    </citation>
    <scope>IDENTIFICATION BY MASS SPECTROMETRY [LARGE SCALE ANALYSIS]</scope>
    <source>
        <strain>N315</strain>
    </source>
</reference>
<accession>Q7A3L3</accession>
<name>Y2273_STAAN</name>
<evidence type="ECO:0000255" key="1">
    <source>
        <dbReference type="PROSITE-ProRule" id="PRU00303"/>
    </source>
</evidence>
<evidence type="ECO:0000305" key="2"/>
<sequence>MIHSKKLTLGICLVLLIILIGGCIIMTKINSRNAQIKDTFNQTLNVYPTKNLDDFYDKEGFRDQEFDKRDKGTWIINSGMYIQLKGGALKSRAMVLYINRNTRTAKGYFLISETTEDKKGYVHNKDKKYPVKMERNRIIPTKPITDEKLKKEIENFKFFVQYGNFKDFKDYKDGDISYNPNVPSYSAKYQLNNDDYNVQQLRKRYDISTKRAPELKLRGSGDLKGSSVGSKELEFNFVRNKEENVYFSDGINFKPTEEMNHEQN</sequence>
<dbReference type="EMBL" id="BA000018">
    <property type="protein sequence ID" value="BAB43576.1"/>
    <property type="molecule type" value="Genomic_DNA"/>
</dbReference>
<dbReference type="PIR" id="F90051">
    <property type="entry name" value="F90051"/>
</dbReference>
<dbReference type="RefSeq" id="WP_000581871.1">
    <property type="nucleotide sequence ID" value="NC_002745.2"/>
</dbReference>
<dbReference type="SMR" id="Q7A3L3"/>
<dbReference type="EnsemblBacteria" id="BAB43576">
    <property type="protein sequence ID" value="BAB43576"/>
    <property type="gene ID" value="BAB43576"/>
</dbReference>
<dbReference type="KEGG" id="sau:SA2273"/>
<dbReference type="HOGENOM" id="CLU_071589_0_0_9"/>
<dbReference type="GO" id="GO:0005886">
    <property type="term" value="C:plasma membrane"/>
    <property type="evidence" value="ECO:0007669"/>
    <property type="project" value="UniProtKB-SubCell"/>
</dbReference>
<dbReference type="Gene3D" id="2.50.20.40">
    <property type="match status" value="1"/>
</dbReference>
<dbReference type="InterPro" id="IPR007595">
    <property type="entry name" value="Csa"/>
</dbReference>
<dbReference type="InterPro" id="IPR038641">
    <property type="entry name" value="Csa_sf"/>
</dbReference>
<dbReference type="NCBIfam" id="TIGR01742">
    <property type="entry name" value="SA_tandem_lipo"/>
    <property type="match status" value="1"/>
</dbReference>
<dbReference type="Pfam" id="PF04507">
    <property type="entry name" value="DUF576"/>
    <property type="match status" value="1"/>
</dbReference>
<dbReference type="PROSITE" id="PS51257">
    <property type="entry name" value="PROKAR_LIPOPROTEIN"/>
    <property type="match status" value="1"/>
</dbReference>
<protein>
    <recommendedName>
        <fullName>Uncharacterized lipoprotein SA2273</fullName>
    </recommendedName>
</protein>
<proteinExistence type="evidence at protein level"/>
<organism>
    <name type="scientific">Staphylococcus aureus (strain N315)</name>
    <dbReference type="NCBI Taxonomy" id="158879"/>
    <lineage>
        <taxon>Bacteria</taxon>
        <taxon>Bacillati</taxon>
        <taxon>Bacillota</taxon>
        <taxon>Bacilli</taxon>
        <taxon>Bacillales</taxon>
        <taxon>Staphylococcaceae</taxon>
        <taxon>Staphylococcus</taxon>
    </lineage>
</organism>